<gene>
    <name type="ORF">SPAC1687.23c</name>
</gene>
<reference key="1">
    <citation type="journal article" date="2002" name="Nature">
        <title>The genome sequence of Schizosaccharomyces pombe.</title>
        <authorList>
            <person name="Wood V."/>
            <person name="Gwilliam R."/>
            <person name="Rajandream M.A."/>
            <person name="Lyne M.H."/>
            <person name="Lyne R."/>
            <person name="Stewart A."/>
            <person name="Sgouros J.G."/>
            <person name="Peat N."/>
            <person name="Hayles J."/>
            <person name="Baker S.G."/>
            <person name="Basham D."/>
            <person name="Bowman S."/>
            <person name="Brooks K."/>
            <person name="Brown D."/>
            <person name="Brown S."/>
            <person name="Chillingworth T."/>
            <person name="Churcher C.M."/>
            <person name="Collins M."/>
            <person name="Connor R."/>
            <person name="Cronin A."/>
            <person name="Davis P."/>
            <person name="Feltwell T."/>
            <person name="Fraser A."/>
            <person name="Gentles S."/>
            <person name="Goble A."/>
            <person name="Hamlin N."/>
            <person name="Harris D.E."/>
            <person name="Hidalgo J."/>
            <person name="Hodgson G."/>
            <person name="Holroyd S."/>
            <person name="Hornsby T."/>
            <person name="Howarth S."/>
            <person name="Huckle E.J."/>
            <person name="Hunt S."/>
            <person name="Jagels K."/>
            <person name="James K.D."/>
            <person name="Jones L."/>
            <person name="Jones M."/>
            <person name="Leather S."/>
            <person name="McDonald S."/>
            <person name="McLean J."/>
            <person name="Mooney P."/>
            <person name="Moule S."/>
            <person name="Mungall K.L."/>
            <person name="Murphy L.D."/>
            <person name="Niblett D."/>
            <person name="Odell C."/>
            <person name="Oliver K."/>
            <person name="O'Neil S."/>
            <person name="Pearson D."/>
            <person name="Quail M.A."/>
            <person name="Rabbinowitsch E."/>
            <person name="Rutherford K.M."/>
            <person name="Rutter S."/>
            <person name="Saunders D."/>
            <person name="Seeger K."/>
            <person name="Sharp S."/>
            <person name="Skelton J."/>
            <person name="Simmonds M.N."/>
            <person name="Squares R."/>
            <person name="Squares S."/>
            <person name="Stevens K."/>
            <person name="Taylor K."/>
            <person name="Taylor R.G."/>
            <person name="Tivey A."/>
            <person name="Walsh S.V."/>
            <person name="Warren T."/>
            <person name="Whitehead S."/>
            <person name="Woodward J.R."/>
            <person name="Volckaert G."/>
            <person name="Aert R."/>
            <person name="Robben J."/>
            <person name="Grymonprez B."/>
            <person name="Weltjens I."/>
            <person name="Vanstreels E."/>
            <person name="Rieger M."/>
            <person name="Schaefer M."/>
            <person name="Mueller-Auer S."/>
            <person name="Gabel C."/>
            <person name="Fuchs M."/>
            <person name="Duesterhoeft A."/>
            <person name="Fritzc C."/>
            <person name="Holzer E."/>
            <person name="Moestl D."/>
            <person name="Hilbert H."/>
            <person name="Borzym K."/>
            <person name="Langer I."/>
            <person name="Beck A."/>
            <person name="Lehrach H."/>
            <person name="Reinhardt R."/>
            <person name="Pohl T.M."/>
            <person name="Eger P."/>
            <person name="Zimmermann W."/>
            <person name="Wedler H."/>
            <person name="Wambutt R."/>
            <person name="Purnelle B."/>
            <person name="Goffeau A."/>
            <person name="Cadieu E."/>
            <person name="Dreano S."/>
            <person name="Gloux S."/>
            <person name="Lelaure V."/>
            <person name="Mottier S."/>
            <person name="Galibert F."/>
            <person name="Aves S.J."/>
            <person name="Xiang Z."/>
            <person name="Hunt C."/>
            <person name="Moore K."/>
            <person name="Hurst S.M."/>
            <person name="Lucas M."/>
            <person name="Rochet M."/>
            <person name="Gaillardin C."/>
            <person name="Tallada V.A."/>
            <person name="Garzon A."/>
            <person name="Thode G."/>
            <person name="Daga R.R."/>
            <person name="Cruzado L."/>
            <person name="Jimenez J."/>
            <person name="Sanchez M."/>
            <person name="del Rey F."/>
            <person name="Benito J."/>
            <person name="Dominguez A."/>
            <person name="Revuelta J.L."/>
            <person name="Moreno S."/>
            <person name="Armstrong J."/>
            <person name="Forsburg S.L."/>
            <person name="Cerutti L."/>
            <person name="Lowe T."/>
            <person name="McCombie W.R."/>
            <person name="Paulsen I."/>
            <person name="Potashkin J."/>
            <person name="Shpakovski G.V."/>
            <person name="Ussery D."/>
            <person name="Barrell B.G."/>
            <person name="Nurse P."/>
        </authorList>
    </citation>
    <scope>NUCLEOTIDE SEQUENCE [LARGE SCALE GENOMIC DNA]</scope>
    <source>
        <strain>972 / ATCC 24843</strain>
    </source>
</reference>
<sequence length="104" mass="12162">MWILEKKNIFFKIIHIKSSRKFDFSNAIRIVLLPFSSNCCRNSYTVNNGTFTGRQIYTSICKSRIPPCLKGKNGKTTKSESEPMSQKHLKYVKKYINKVRILKK</sequence>
<accession>Q9C118</accession>
<organism>
    <name type="scientific">Schizosaccharomyces pombe (strain 972 / ATCC 24843)</name>
    <name type="common">Fission yeast</name>
    <dbReference type="NCBI Taxonomy" id="284812"/>
    <lineage>
        <taxon>Eukaryota</taxon>
        <taxon>Fungi</taxon>
        <taxon>Dikarya</taxon>
        <taxon>Ascomycota</taxon>
        <taxon>Taphrinomycotina</taxon>
        <taxon>Schizosaccharomycetes</taxon>
        <taxon>Schizosaccharomycetales</taxon>
        <taxon>Schizosaccharomycetaceae</taxon>
        <taxon>Schizosaccharomyces</taxon>
    </lineage>
</organism>
<feature type="chain" id="PRO_0000116740" description="Uncharacterized protein C1687.23c">
    <location>
        <begin position="1"/>
        <end position="104"/>
    </location>
</feature>
<protein>
    <recommendedName>
        <fullName>Uncharacterized protein C1687.23c</fullName>
    </recommendedName>
</protein>
<proteinExistence type="predicted"/>
<dbReference type="EMBL" id="CU329670">
    <property type="protein sequence ID" value="CAC34405.1"/>
    <property type="molecule type" value="Genomic_DNA"/>
</dbReference>
<dbReference type="RefSeq" id="NP_593133.1">
    <property type="nucleotide sequence ID" value="NM_001018529.2"/>
</dbReference>
<dbReference type="PaxDb" id="4896-SPAC1687.23c.1"/>
<dbReference type="EnsemblFungi" id="SPAC1687.23c.1">
    <property type="protein sequence ID" value="SPAC1687.23c.1:pep"/>
    <property type="gene ID" value="SPAC1687.23c"/>
</dbReference>
<dbReference type="KEGG" id="spo:2542302"/>
<dbReference type="PomBase" id="SPAC1687.23c"/>
<dbReference type="VEuPathDB" id="FungiDB:SPAC1687.23c"/>
<dbReference type="HOGENOM" id="CLU_2251624_0_0_1"/>
<dbReference type="InParanoid" id="Q9C118"/>
<dbReference type="PRO" id="PR:Q9C118"/>
<dbReference type="Proteomes" id="UP000002485">
    <property type="component" value="Chromosome I"/>
</dbReference>
<dbReference type="GO" id="GO:0005739">
    <property type="term" value="C:mitochondrion"/>
    <property type="evidence" value="ECO:0007005"/>
    <property type="project" value="PomBase"/>
</dbReference>
<keyword id="KW-1185">Reference proteome</keyword>
<name>YFFN_SCHPO</name>